<gene>
    <name evidence="12" type="primary">MYB33</name>
    <name evidence="14" type="ordered locus">At5g06100</name>
    <name evidence="15" type="ORF">K16F4.6</name>
</gene>
<dbReference type="EMBL" id="AF411969">
    <property type="protein sequence ID" value="AAL58844.1"/>
    <property type="molecule type" value="mRNA"/>
</dbReference>
<dbReference type="EMBL" id="AY519616">
    <property type="protein sequence ID" value="AAS10086.1"/>
    <property type="molecule type" value="mRNA"/>
</dbReference>
<dbReference type="EMBL" id="AP002030">
    <property type="protein sequence ID" value="BAA98199.1"/>
    <property type="molecule type" value="Genomic_DNA"/>
</dbReference>
<dbReference type="EMBL" id="CP002688">
    <property type="protein sequence ID" value="AED90964.1"/>
    <property type="molecule type" value="Genomic_DNA"/>
</dbReference>
<dbReference type="EMBL" id="CP002688">
    <property type="protein sequence ID" value="AED90965.1"/>
    <property type="molecule type" value="Genomic_DNA"/>
</dbReference>
<dbReference type="EMBL" id="CP002688">
    <property type="protein sequence ID" value="AED90966.1"/>
    <property type="molecule type" value="Genomic_DNA"/>
</dbReference>
<dbReference type="EMBL" id="CP002688">
    <property type="protein sequence ID" value="ANM69304.1"/>
    <property type="molecule type" value="Genomic_DNA"/>
</dbReference>
<dbReference type="EMBL" id="CP002688">
    <property type="protein sequence ID" value="ANM69305.1"/>
    <property type="molecule type" value="Genomic_DNA"/>
</dbReference>
<dbReference type="EMBL" id="AK118937">
    <property type="protein sequence ID" value="BAC43518.1"/>
    <property type="molecule type" value="mRNA"/>
</dbReference>
<dbReference type="EMBL" id="BT006049">
    <property type="protein sequence ID" value="AAP04034.1"/>
    <property type="molecule type" value="mRNA"/>
</dbReference>
<dbReference type="EMBL" id="AF062875">
    <property type="protein sequence ID" value="AAC83597.1"/>
    <property type="status" value="ALT_FRAME"/>
    <property type="molecule type" value="mRNA"/>
</dbReference>
<dbReference type="EMBL" id="EU550609">
    <property type="protein sequence ID" value="ACB31371.1"/>
    <property type="molecule type" value="Genomic_DNA"/>
</dbReference>
<dbReference type="EMBL" id="EU550587">
    <property type="protein sequence ID" value="ACB31349.1"/>
    <property type="molecule type" value="Genomic_DNA"/>
</dbReference>
<dbReference type="EMBL" id="EU550588">
    <property type="protein sequence ID" value="ACB31350.1"/>
    <property type="molecule type" value="Genomic_DNA"/>
</dbReference>
<dbReference type="EMBL" id="EU550589">
    <property type="protein sequence ID" value="ACB31351.1"/>
    <property type="molecule type" value="Genomic_DNA"/>
</dbReference>
<dbReference type="EMBL" id="EU550591">
    <property type="protein sequence ID" value="ACB31353.1"/>
    <property type="molecule type" value="Genomic_DNA"/>
</dbReference>
<dbReference type="EMBL" id="EU550590">
    <property type="protein sequence ID" value="ACB31352.1"/>
    <property type="molecule type" value="Genomic_DNA"/>
</dbReference>
<dbReference type="EMBL" id="EU550592">
    <property type="protein sequence ID" value="ACB31354.1"/>
    <property type="molecule type" value="Genomic_DNA"/>
</dbReference>
<dbReference type="EMBL" id="EU550593">
    <property type="protein sequence ID" value="ACB31355.1"/>
    <property type="molecule type" value="Genomic_DNA"/>
</dbReference>
<dbReference type="EMBL" id="EU550594">
    <property type="protein sequence ID" value="ACB31356.1"/>
    <property type="molecule type" value="Genomic_DNA"/>
</dbReference>
<dbReference type="EMBL" id="EU550595">
    <property type="protein sequence ID" value="ACB31357.1"/>
    <property type="molecule type" value="Genomic_DNA"/>
</dbReference>
<dbReference type="EMBL" id="EU550597">
    <property type="protein sequence ID" value="ACB31359.1"/>
    <property type="molecule type" value="Genomic_DNA"/>
</dbReference>
<dbReference type="EMBL" id="EU550596">
    <property type="protein sequence ID" value="ACB31358.1"/>
    <property type="molecule type" value="Genomic_DNA"/>
</dbReference>
<dbReference type="EMBL" id="EU550598">
    <property type="protein sequence ID" value="ACB31360.1"/>
    <property type="molecule type" value="Genomic_DNA"/>
</dbReference>
<dbReference type="EMBL" id="EU550599">
    <property type="protein sequence ID" value="ACB31361.1"/>
    <property type="molecule type" value="Genomic_DNA"/>
</dbReference>
<dbReference type="EMBL" id="EU550600">
    <property type="protein sequence ID" value="ACB31362.1"/>
    <property type="molecule type" value="Genomic_DNA"/>
</dbReference>
<dbReference type="EMBL" id="EU550601">
    <property type="protein sequence ID" value="ACB31363.1"/>
    <property type="molecule type" value="Genomic_DNA"/>
</dbReference>
<dbReference type="EMBL" id="EU550602">
    <property type="protein sequence ID" value="ACB31364.1"/>
    <property type="molecule type" value="Genomic_DNA"/>
</dbReference>
<dbReference type="EMBL" id="EU550603">
    <property type="protein sequence ID" value="ACB31365.1"/>
    <property type="molecule type" value="Genomic_DNA"/>
</dbReference>
<dbReference type="EMBL" id="EU550604">
    <property type="protein sequence ID" value="ACB31366.1"/>
    <property type="molecule type" value="Genomic_DNA"/>
</dbReference>
<dbReference type="EMBL" id="EU550605">
    <property type="protein sequence ID" value="ACB31367.1"/>
    <property type="molecule type" value="Genomic_DNA"/>
</dbReference>
<dbReference type="EMBL" id="EU550606">
    <property type="protein sequence ID" value="ACB31368.1"/>
    <property type="molecule type" value="Genomic_DNA"/>
</dbReference>
<dbReference type="EMBL" id="EU550607">
    <property type="protein sequence ID" value="ACB31369.1"/>
    <property type="molecule type" value="Genomic_DNA"/>
</dbReference>
<dbReference type="EMBL" id="EU550608">
    <property type="protein sequence ID" value="ACB31370.1"/>
    <property type="molecule type" value="Genomic_DNA"/>
</dbReference>
<dbReference type="PIR" id="T51647">
    <property type="entry name" value="T51647"/>
</dbReference>
<dbReference type="RefSeq" id="NP_001078537.1">
    <molecule id="Q8W1W6-1"/>
    <property type="nucleotide sequence ID" value="NM_001085068.2"/>
</dbReference>
<dbReference type="RefSeq" id="NP_001330996.1">
    <molecule id="Q8W1W6-1"/>
    <property type="nucleotide sequence ID" value="NM_001342849.1"/>
</dbReference>
<dbReference type="RefSeq" id="NP_001330997.1">
    <molecule id="Q8W1W6-1"/>
    <property type="nucleotide sequence ID" value="NM_001342848.1"/>
</dbReference>
<dbReference type="RefSeq" id="NP_196228.1">
    <molecule id="Q8W1W6-2"/>
    <property type="nucleotide sequence ID" value="NM_120692.3"/>
</dbReference>
<dbReference type="RefSeq" id="NP_850779.1">
    <molecule id="Q8W1W6-1"/>
    <property type="nucleotide sequence ID" value="NM_180448.2"/>
</dbReference>
<dbReference type="SMR" id="Q8W1W6"/>
<dbReference type="FunCoup" id="Q8W1W6">
    <property type="interactions" value="688"/>
</dbReference>
<dbReference type="IntAct" id="Q8W1W6">
    <property type="interactions" value="3"/>
</dbReference>
<dbReference type="STRING" id="3702.Q8W1W6"/>
<dbReference type="GlyGen" id="Q8W1W6">
    <property type="glycosylation" value="1 site"/>
</dbReference>
<dbReference type="iPTMnet" id="Q8W1W6"/>
<dbReference type="PaxDb" id="3702-AT5G06100.2"/>
<dbReference type="EnsemblPlants" id="AT5G06100.1">
    <molecule id="Q8W1W6-2"/>
    <property type="protein sequence ID" value="AT5G06100.1"/>
    <property type="gene ID" value="AT5G06100"/>
</dbReference>
<dbReference type="EnsemblPlants" id="AT5G06100.2">
    <molecule id="Q8W1W6-1"/>
    <property type="protein sequence ID" value="AT5G06100.2"/>
    <property type="gene ID" value="AT5G06100"/>
</dbReference>
<dbReference type="EnsemblPlants" id="AT5G06100.3">
    <molecule id="Q8W1W6-1"/>
    <property type="protein sequence ID" value="AT5G06100.3"/>
    <property type="gene ID" value="AT5G06100"/>
</dbReference>
<dbReference type="EnsemblPlants" id="AT5G06100.4">
    <molecule id="Q8W1W6-1"/>
    <property type="protein sequence ID" value="AT5G06100.4"/>
    <property type="gene ID" value="AT5G06100"/>
</dbReference>
<dbReference type="EnsemblPlants" id="AT5G06100.5">
    <molecule id="Q8W1W6-1"/>
    <property type="protein sequence ID" value="AT5G06100.5"/>
    <property type="gene ID" value="AT5G06100"/>
</dbReference>
<dbReference type="GeneID" id="830497"/>
<dbReference type="Gramene" id="AT5G06100.1">
    <molecule id="Q8W1W6-2"/>
    <property type="protein sequence ID" value="AT5G06100.1"/>
    <property type="gene ID" value="AT5G06100"/>
</dbReference>
<dbReference type="Gramene" id="AT5G06100.2">
    <molecule id="Q8W1W6-1"/>
    <property type="protein sequence ID" value="AT5G06100.2"/>
    <property type="gene ID" value="AT5G06100"/>
</dbReference>
<dbReference type="Gramene" id="AT5G06100.3">
    <molecule id="Q8W1W6-1"/>
    <property type="protein sequence ID" value="AT5G06100.3"/>
    <property type="gene ID" value="AT5G06100"/>
</dbReference>
<dbReference type="Gramene" id="AT5G06100.4">
    <molecule id="Q8W1W6-1"/>
    <property type="protein sequence ID" value="AT5G06100.4"/>
    <property type="gene ID" value="AT5G06100"/>
</dbReference>
<dbReference type="Gramene" id="AT5G06100.5">
    <molecule id="Q8W1W6-1"/>
    <property type="protein sequence ID" value="AT5G06100.5"/>
    <property type="gene ID" value="AT5G06100"/>
</dbReference>
<dbReference type="KEGG" id="ath:AT5G06100"/>
<dbReference type="Araport" id="AT5G06100"/>
<dbReference type="TAIR" id="AT5G06100">
    <property type="gene designation" value="MYB33"/>
</dbReference>
<dbReference type="eggNOG" id="KOG0048">
    <property type="taxonomic scope" value="Eukaryota"/>
</dbReference>
<dbReference type="HOGENOM" id="CLU_023548_1_1_1"/>
<dbReference type="InParanoid" id="Q8W1W6"/>
<dbReference type="OMA" id="WENCGET"/>
<dbReference type="OrthoDB" id="2143914at2759"/>
<dbReference type="PhylomeDB" id="Q8W1W6"/>
<dbReference type="PRO" id="PR:Q8W1W6"/>
<dbReference type="Proteomes" id="UP000006548">
    <property type="component" value="Chromosome 5"/>
</dbReference>
<dbReference type="ExpressionAtlas" id="Q8W1W6">
    <property type="expression patterns" value="baseline and differential"/>
</dbReference>
<dbReference type="GO" id="GO:0005634">
    <property type="term" value="C:nucleus"/>
    <property type="evidence" value="ECO:0000304"/>
    <property type="project" value="TAIR"/>
</dbReference>
<dbReference type="GO" id="GO:0003700">
    <property type="term" value="F:DNA-binding transcription factor activity"/>
    <property type="evidence" value="ECO:0000250"/>
    <property type="project" value="TAIR"/>
</dbReference>
<dbReference type="GO" id="GO:0043565">
    <property type="term" value="F:sequence-specific DNA binding"/>
    <property type="evidence" value="ECO:0000314"/>
    <property type="project" value="UniProtKB"/>
</dbReference>
<dbReference type="GO" id="GO:0048653">
    <property type="term" value="P:anther development"/>
    <property type="evidence" value="ECO:0000315"/>
    <property type="project" value="UniProtKB"/>
</dbReference>
<dbReference type="GO" id="GO:0048655">
    <property type="term" value="P:anther wall tapetum morphogenesis"/>
    <property type="evidence" value="ECO:0000315"/>
    <property type="project" value="UniProtKB"/>
</dbReference>
<dbReference type="GO" id="GO:0009740">
    <property type="term" value="P:gibberellic acid mediated signaling pathway"/>
    <property type="evidence" value="ECO:0000304"/>
    <property type="project" value="TAIR"/>
</dbReference>
<dbReference type="GO" id="GO:0008285">
    <property type="term" value="P:negative regulation of cell population proliferation"/>
    <property type="evidence" value="ECO:0000315"/>
    <property type="project" value="UniProtKB"/>
</dbReference>
<dbReference type="GO" id="GO:0045926">
    <property type="term" value="P:negative regulation of growth"/>
    <property type="evidence" value="ECO:0000315"/>
    <property type="project" value="TAIR"/>
</dbReference>
<dbReference type="GO" id="GO:0048235">
    <property type="term" value="P:pollen sperm cell differentiation"/>
    <property type="evidence" value="ECO:0000316"/>
    <property type="project" value="TAIR"/>
</dbReference>
<dbReference type="GO" id="GO:0009789">
    <property type="term" value="P:positive regulation of abscisic acid-activated signaling pathway"/>
    <property type="evidence" value="ECO:0000315"/>
    <property type="project" value="TAIR"/>
</dbReference>
<dbReference type="GO" id="GO:0045893">
    <property type="term" value="P:positive regulation of DNA-templated transcription"/>
    <property type="evidence" value="ECO:0000315"/>
    <property type="project" value="TAIR"/>
</dbReference>
<dbReference type="GO" id="GO:0043068">
    <property type="term" value="P:positive regulation of programmed cell death"/>
    <property type="evidence" value="ECO:0000315"/>
    <property type="project" value="TAIR"/>
</dbReference>
<dbReference type="GO" id="GO:1990019">
    <property type="term" value="P:protein storage vacuole organization"/>
    <property type="evidence" value="ECO:0000315"/>
    <property type="project" value="UniProtKB"/>
</dbReference>
<dbReference type="GO" id="GO:0009735">
    <property type="term" value="P:response to cytokinin"/>
    <property type="evidence" value="ECO:0000270"/>
    <property type="project" value="UniProtKB"/>
</dbReference>
<dbReference type="GO" id="GO:0009723">
    <property type="term" value="P:response to ethylene"/>
    <property type="evidence" value="ECO:0000270"/>
    <property type="project" value="UniProtKB"/>
</dbReference>
<dbReference type="GO" id="GO:0009739">
    <property type="term" value="P:response to gibberellin"/>
    <property type="evidence" value="ECO:0000270"/>
    <property type="project" value="UniProtKB"/>
</dbReference>
<dbReference type="CDD" id="cd00167">
    <property type="entry name" value="SANT"/>
    <property type="match status" value="2"/>
</dbReference>
<dbReference type="FunFam" id="1.10.10.60:FF:000001">
    <property type="entry name" value="MYB-related transcription factor"/>
    <property type="match status" value="1"/>
</dbReference>
<dbReference type="FunFam" id="1.10.10.60:FF:000119">
    <property type="entry name" value="Transcription factor GAMYB"/>
    <property type="match status" value="1"/>
</dbReference>
<dbReference type="Gene3D" id="1.10.10.60">
    <property type="entry name" value="Homeodomain-like"/>
    <property type="match status" value="2"/>
</dbReference>
<dbReference type="InterPro" id="IPR016310">
    <property type="entry name" value="GAMYB-like"/>
</dbReference>
<dbReference type="InterPro" id="IPR009057">
    <property type="entry name" value="Homeodomain-like_sf"/>
</dbReference>
<dbReference type="InterPro" id="IPR017930">
    <property type="entry name" value="Myb_dom"/>
</dbReference>
<dbReference type="InterPro" id="IPR001005">
    <property type="entry name" value="SANT/Myb"/>
</dbReference>
<dbReference type="PANTHER" id="PTHR47995:SF6">
    <property type="entry name" value="MYB DOMAIN PROTEIN 81-RELATED"/>
    <property type="match status" value="1"/>
</dbReference>
<dbReference type="PANTHER" id="PTHR47995">
    <property type="entry name" value="TRANSCRIPTION FACTOR MYB33-RELATED"/>
    <property type="match status" value="1"/>
</dbReference>
<dbReference type="Pfam" id="PF00249">
    <property type="entry name" value="Myb_DNA-binding"/>
    <property type="match status" value="2"/>
</dbReference>
<dbReference type="PIRSF" id="PIRSF001693">
    <property type="entry name" value="Transcription_factor_GAMYB"/>
    <property type="match status" value="1"/>
</dbReference>
<dbReference type="SMART" id="SM00717">
    <property type="entry name" value="SANT"/>
    <property type="match status" value="2"/>
</dbReference>
<dbReference type="SUPFAM" id="SSF46689">
    <property type="entry name" value="Homeodomain-like"/>
    <property type="match status" value="1"/>
</dbReference>
<dbReference type="PROSITE" id="PS51294">
    <property type="entry name" value="HTH_MYB"/>
    <property type="match status" value="2"/>
</dbReference>
<evidence type="ECO:0000255" key="1">
    <source>
        <dbReference type="PROSITE-ProRule" id="PRU00625"/>
    </source>
</evidence>
<evidence type="ECO:0000256" key="2">
    <source>
        <dbReference type="SAM" id="MobiDB-lite"/>
    </source>
</evidence>
<evidence type="ECO:0000269" key="3">
    <source>
    </source>
</evidence>
<evidence type="ECO:0000269" key="4">
    <source>
    </source>
</evidence>
<evidence type="ECO:0000269" key="5">
    <source>
    </source>
</evidence>
<evidence type="ECO:0000269" key="6">
    <source>
    </source>
</evidence>
<evidence type="ECO:0000269" key="7">
    <source>
    </source>
</evidence>
<evidence type="ECO:0000269" key="8">
    <source>
    </source>
</evidence>
<evidence type="ECO:0000269" key="9">
    <source>
    </source>
</evidence>
<evidence type="ECO:0000269" key="10">
    <source>
    </source>
</evidence>
<evidence type="ECO:0000269" key="11">
    <source>
    </source>
</evidence>
<evidence type="ECO:0000303" key="12">
    <source>
    </source>
</evidence>
<evidence type="ECO:0000305" key="13"/>
<evidence type="ECO:0000312" key="14">
    <source>
        <dbReference type="Araport" id="AT5G06100"/>
    </source>
</evidence>
<evidence type="ECO:0000312" key="15">
    <source>
        <dbReference type="EMBL" id="BAA98199.1"/>
    </source>
</evidence>
<keyword id="KW-0010">Activator</keyword>
<keyword id="KW-0025">Alternative splicing</keyword>
<keyword id="KW-0217">Developmental protein</keyword>
<keyword id="KW-0221">Differentiation</keyword>
<keyword id="KW-0238">DNA-binding</keyword>
<keyword id="KW-0287">Flowering</keyword>
<keyword id="KW-0539">Nucleus</keyword>
<keyword id="KW-1185">Reference proteome</keyword>
<keyword id="KW-0677">Repeat</keyword>
<keyword id="KW-0804">Transcription</keyword>
<keyword id="KW-0805">Transcription regulation</keyword>
<sequence>MSYTSTDSDHNESPAADDNGSDCRSRWDGHALKKGPWSSAEDDILIDYVNKHGEGNWNAVQKHTSLFRCGKSCRLRWANHLRPNLKKGAFSQEEEQLIVELHAKMGNRWARMAAHLPGRTDNEIKNYWNTRIKRRQRAGLPLYPPEMHVEALEWSQEYAKSRVMGEDRRHQDFLQLGSCESNVFFDTLNFTDMVPGTFDLADMTAYKNMGNCASSPRYENFMTPTIPSSKRLWESELLYPGCSSTIKQEFSSPEQFRNTSPQTISKTCSFSVPCDVEHPLYGNRHSPVMIPDSHTPTDGIVPYSKPLYGAVKLELPSFQYSETTFDQWKKSSSPPHSDLLDPFDTYIQSPPPPTGGEESDLYSNFDTGLLDMLLLEAKIRNNSTKNNLYRSCASTIPSADLGQVTVSQTKSEEFDNSLKSFLVHSEMSTQNADETPPRQREKKRKPLLDITRPDVLLASSWLDHGLGIVKETGSMSDALAVLLGDDIGNDYMNMSVGASSGVGSCSWSNMPPVCQMTELP</sequence>
<name>MYB33_ARATH</name>
<comment type="function">
    <text evidence="3 4 5 6 9">Transcriptional activator of alpha-amylase expression that binds to 5'-CAACTGTC-3' motif in target gene promoter (PubMed:11743113). Positive regulator of abscisic acid (ABA) responses leading to growth arrest during seed germination (PubMed:17217461). In vegetative tissues, inhibits growth by reducing cell proliferation. Promotes the expression of aleurone-related genes (e.g. CP1, CP, GASA1, BXL1 and BXL2) in seeds. Together with MYB65 and MYB101, promotes the programmed cell death (PCD) the vacuolation of protein storage vacuoles (PSVs) in the aleurone layers during seed germination (PubMed:20699403). Binds to a GARE site (GA-response element) in the LEAFY promoter, essential for its gibberellic acid (GA)-mediated induction (PubMed:15226253). Together with MYB65, facilitates anther and tapetum development (PubMed:15722475).</text>
</comment>
<comment type="subcellular location">
    <subcellularLocation>
        <location evidence="1">Nucleus</location>
    </subcellularLocation>
</comment>
<comment type="alternative products">
    <event type="alternative splicing"/>
    <isoform>
        <id>Q8W1W6-1</id>
        <name>1</name>
        <sequence type="displayed"/>
    </isoform>
    <isoform>
        <id>Q8W1W6-2</id>
        <name>2</name>
        <sequence type="described" ref="VSP_058813 VSP_058814"/>
    </isoform>
</comment>
<comment type="tissue specificity">
    <text evidence="3 5 10 11">Mostly expressed in stems, shoot apices, flowers and floral shoot tips, and, to a lower extent, in roots (e.g. root tips), seedlings, leaves and siliques.</text>
</comment>
<comment type="developmental stage">
    <text evidence="3 5">In germinating seeds, present in the root tip and in a linear array of up to 20 to 30 cells above the root tip. Weak expression in the vegetative shoot apex. High levels in primordial leaves. Strongly expressed in the inflorescence apex, and, to some extent, in the inflorescence stem, the vascular tissue, and the vascular tissue in leaf primordia. In the gynoecium, confined to ovules. In developing anthers detected in developing locules of immature anthers and later, at low levels, in pollen grains (PubMed:11743113). In flowers, expressed in sepals, style, receptacle, anther filaments, especially in young anthers, and connective but not in anthers themselves (PubMed:15722475).</text>
</comment>
<comment type="induction">
    <text evidence="3 4 5 6 7 8 9 11">Accumulates at the shoot apex upon the transition from short- to long-day photoperiods leading to flowering and after gibberellins (GAs) treatment (PubMed:11743113). Repressed by microRNA159 (miR159a and miR159b) in vegetative tissues (PubMed:15226253, PubMed:17916625, PubMed:20699403). Specific expression in floral organs and in the shoot apices is regulated via miR159-mediated degradation (PubMed:15722475). Repressed in germinating seeds by miR159-mediated cleavage in an abscisic acid (ABA) and ABI3-dependent manner, probably to desensitize hormone signaling during seedling stress responses (PubMed:17217461, PubMed:18305205). Slightly induced by ethylene and cytokinins (PubMed:9839469).</text>
</comment>
<comment type="disruption phenotype">
    <text evidence="5 6 9">Hyposensitivity to abscisic acid (ABA) (PubMed:17217461). Reduced expression levels of aleurone-related genes (e.g. CP1, CP, GASA1, BXL1 and BXL2) in seeds. The triple mutant myb33 myb65 myb101 has a male sterility and exhibits slower protein storage vacuoles (PSVs) vacuolation rate in aleurone layers upon seed germination (PubMed:20699403). The myb33 myb65 double mutant is defective in anther development, with a tapetum undergoing hypertrophy at the pollen mother cell stage, resulting in premeiotic abortion of pollen development and male sterility. This sterility is conditional, fertility being increased both under higher light or lower temperature conditions (PubMed:15722475).</text>
</comment>
<comment type="sequence caution" evidence="13">
    <conflict type="frameshift">
        <sequence resource="EMBL-CDS" id="AAC83597"/>
    </conflict>
</comment>
<protein>
    <recommendedName>
        <fullName evidence="12">Transcription factor MYB33</fullName>
    </recommendedName>
    <alternativeName>
        <fullName evidence="12">Myb-related protein 33</fullName>
        <shortName evidence="12">AtMYB33</shortName>
    </alternativeName>
</protein>
<reference key="1">
    <citation type="journal article" date="2001" name="Plant Physiol.">
        <title>GAMYB-like genes, flowering, and gibberellin signaling in Arabidopsis.</title>
        <authorList>
            <person name="Gocal G.F.W."/>
            <person name="Sheldon C.C."/>
            <person name="Gubler F."/>
            <person name="Moritz T."/>
            <person name="Bagnall D.J."/>
            <person name="MacMillan C.P."/>
            <person name="Li S.F."/>
            <person name="Parish R.W."/>
            <person name="Dennis E.S."/>
            <person name="Weigel D."/>
            <person name="King R.W."/>
        </authorList>
    </citation>
    <scope>NUCLEOTIDE SEQUENCE [MRNA] (ISOFORM 1)</scope>
    <scope>FUNCTION</scope>
    <scope>TISSUE SPECIFICITY</scope>
    <scope>DEVELOPMENTAL STAGE</scope>
    <scope>INDUCTION BY GIBBERELLINS AND FLOWERING</scope>
    <source>
        <strain>cv. Columbia</strain>
        <strain>cv. Landsberg erecta</strain>
    </source>
</reference>
<reference key="2">
    <citation type="submission" date="2004-01" db="EMBL/GenBank/DDBJ databases">
        <title>The MYB transcription factor family in Arabidopsis: A genome-wide cloning and expression pattern analysis.</title>
        <authorList>
            <person name="Qu L."/>
            <person name="Gu H."/>
        </authorList>
    </citation>
    <scope>NUCLEOTIDE SEQUENCE [MRNA] (ISOFORM 1)</scope>
</reference>
<reference key="3">
    <citation type="submission" date="2000-05" db="EMBL/GenBank/DDBJ databases">
        <title>Structural analysis of Arabidopsis thaliana chromosome 5. XI.</title>
        <authorList>
            <person name="Kaneko T."/>
            <person name="Katoh T."/>
            <person name="Asamizu E."/>
            <person name="Sato S."/>
            <person name="Nakamura Y."/>
            <person name="Kotani H."/>
            <person name="Tabata S."/>
        </authorList>
    </citation>
    <scope>NUCLEOTIDE SEQUENCE [LARGE SCALE GENOMIC DNA] (ISOFORM 2)</scope>
    <source>
        <strain>cv. Columbia</strain>
    </source>
</reference>
<reference key="4">
    <citation type="journal article" date="2017" name="Plant J.">
        <title>Araport11: a complete reannotation of the Arabidopsis thaliana reference genome.</title>
        <authorList>
            <person name="Cheng C.Y."/>
            <person name="Krishnakumar V."/>
            <person name="Chan A.P."/>
            <person name="Thibaud-Nissen F."/>
            <person name="Schobel S."/>
            <person name="Town C.D."/>
        </authorList>
    </citation>
    <scope>GENOME REANNOTATION</scope>
    <source>
        <strain>cv. Columbia</strain>
    </source>
</reference>
<reference key="5">
    <citation type="journal article" date="2002" name="Science">
        <title>Functional annotation of a full-length Arabidopsis cDNA collection.</title>
        <authorList>
            <person name="Seki M."/>
            <person name="Narusaka M."/>
            <person name="Kamiya A."/>
            <person name="Ishida J."/>
            <person name="Satou M."/>
            <person name="Sakurai T."/>
            <person name="Nakajima M."/>
            <person name="Enju A."/>
            <person name="Akiyama K."/>
            <person name="Oono Y."/>
            <person name="Muramatsu M."/>
            <person name="Hayashizaki Y."/>
            <person name="Kawai J."/>
            <person name="Carninci P."/>
            <person name="Itoh M."/>
            <person name="Ishii Y."/>
            <person name="Arakawa T."/>
            <person name="Shibata K."/>
            <person name="Shinagawa A."/>
            <person name="Shinozaki K."/>
        </authorList>
    </citation>
    <scope>NUCLEOTIDE SEQUENCE [LARGE SCALE MRNA] (ISOFORM 1)</scope>
    <source>
        <strain>cv. Columbia</strain>
    </source>
</reference>
<reference key="6">
    <citation type="journal article" date="2003" name="Science">
        <title>Empirical analysis of transcriptional activity in the Arabidopsis genome.</title>
        <authorList>
            <person name="Yamada K."/>
            <person name="Lim J."/>
            <person name="Dale J.M."/>
            <person name="Chen H."/>
            <person name="Shinn P."/>
            <person name="Palm C.J."/>
            <person name="Southwick A.M."/>
            <person name="Wu H.C."/>
            <person name="Kim C.J."/>
            <person name="Nguyen M."/>
            <person name="Pham P.K."/>
            <person name="Cheuk R.F."/>
            <person name="Karlin-Newmann G."/>
            <person name="Liu S.X."/>
            <person name="Lam B."/>
            <person name="Sakano H."/>
            <person name="Wu T."/>
            <person name="Yu G."/>
            <person name="Miranda M."/>
            <person name="Quach H.L."/>
            <person name="Tripp M."/>
            <person name="Chang C.H."/>
            <person name="Lee J.M."/>
            <person name="Toriumi M.J."/>
            <person name="Chan M.M."/>
            <person name="Tang C.C."/>
            <person name="Onodera C.S."/>
            <person name="Deng J.M."/>
            <person name="Akiyama K."/>
            <person name="Ansari Y."/>
            <person name="Arakawa T."/>
            <person name="Banh J."/>
            <person name="Banno F."/>
            <person name="Bowser L."/>
            <person name="Brooks S.Y."/>
            <person name="Carninci P."/>
            <person name="Chao Q."/>
            <person name="Choy N."/>
            <person name="Enju A."/>
            <person name="Goldsmith A.D."/>
            <person name="Gurjal M."/>
            <person name="Hansen N.F."/>
            <person name="Hayashizaki Y."/>
            <person name="Johnson-Hopson C."/>
            <person name="Hsuan V.W."/>
            <person name="Iida K."/>
            <person name="Karnes M."/>
            <person name="Khan S."/>
            <person name="Koesema E."/>
            <person name="Ishida J."/>
            <person name="Jiang P.X."/>
            <person name="Jones T."/>
            <person name="Kawai J."/>
            <person name="Kamiya A."/>
            <person name="Meyers C."/>
            <person name="Nakajima M."/>
            <person name="Narusaka M."/>
            <person name="Seki M."/>
            <person name="Sakurai T."/>
            <person name="Satou M."/>
            <person name="Tamse R."/>
            <person name="Vaysberg M."/>
            <person name="Wallender E.K."/>
            <person name="Wong C."/>
            <person name="Yamamura Y."/>
            <person name="Yuan S."/>
            <person name="Shinozaki K."/>
            <person name="Davis R.W."/>
            <person name="Theologis A."/>
            <person name="Ecker J.R."/>
        </authorList>
    </citation>
    <scope>NUCLEOTIDE SEQUENCE [LARGE SCALE MRNA] (ISOFORM 1)</scope>
    <source>
        <strain>cv. Columbia</strain>
    </source>
</reference>
<reference key="7">
    <citation type="journal article" date="1998" name="Plant J.">
        <title>Towards functional characterisation of the members of the R2R3-MYB gene family from Arabidopsis thaliana.</title>
        <authorList>
            <person name="Kranz H.D."/>
            <person name="Denekamp M."/>
            <person name="Greco R."/>
            <person name="Jin H.-L."/>
            <person name="Leyva A."/>
            <person name="Meissner R.C."/>
            <person name="Petroni K."/>
            <person name="Urzainqui A."/>
            <person name="Bevan M."/>
            <person name="Martin C."/>
            <person name="Smeekens S."/>
            <person name="Tonelli C."/>
            <person name="Paz-Ares J."/>
            <person name="Weisshaar B."/>
        </authorList>
    </citation>
    <scope>NUCLEOTIDE SEQUENCE [MRNA] OF 75-452 (ISOFORM 2)</scope>
    <scope>TISSUE SPECIFICITY</scope>
    <scope>INDUCTION BY ETHYLENE AND CYTOKININS</scope>
    <scope>GENE FAMILY</scope>
    <scope>NOMENCLATURE</scope>
    <source>
        <strain>cv. Columbia</strain>
    </source>
</reference>
<reference key="8">
    <citation type="journal article" date="2008" name="Plant Physiol.">
        <title>Sequence variation of microRNAs and their binding sites in Arabidopsis.</title>
        <authorList>
            <person name="Ehrenreich I.M."/>
            <person name="Purugganan M.D."/>
        </authorList>
    </citation>
    <scope>NUCLEOTIDE SEQUENCE [GENOMIC DNA] OF 250-393 (ISOFORM 1/2)</scope>
    <scope>REGULATION BY MIR159</scope>
    <source>
        <strain>cv. Ag-0</strain>
        <strain>cv. An-1</strain>
        <strain>cv. Bay-0</strain>
        <strain>cv. C24</strain>
        <strain>cv. Ct-1</strain>
        <strain>cv. Cvi-0</strain>
        <strain>cv. Edi-0</strain>
        <strain>cv. Ei-2</strain>
        <strain>cv. Ga-0</strain>
        <strain>cv. Gy-0</strain>
        <strain>cv. Kas-2</strain>
        <strain>cv. Ll-0</strain>
        <strain>cv. Mrk-0</strain>
        <strain>cv. Ms-0</strain>
        <strain>cv. Mt-0</strain>
        <strain>cv. Nd-1</strain>
        <strain>cv. Nok-3</strain>
        <strain>cv. Oy-0</strain>
        <strain>cv. Sorbo</strain>
        <strain>cv. Wa-1</strain>
        <strain>cv. Wassilewskija</strain>
        <strain>cv. Wei-0</strain>
        <strain>cv. Wt-5</strain>
    </source>
</reference>
<reference key="9">
    <citation type="journal article" date="2001" name="Curr. Opin. Plant Biol.">
        <title>The R2R3-MYB gene family in Arabidopsis thaliana.</title>
        <authorList>
            <person name="Stracke R."/>
            <person name="Werber M."/>
            <person name="Weisshaar B."/>
        </authorList>
    </citation>
    <scope>GENE FAMILY</scope>
    <scope>NOMENCLATURE</scope>
    <source>
        <strain>cv. Columbia</strain>
    </source>
</reference>
<reference key="10">
    <citation type="journal article" date="2004" name="Development">
        <title>Modulation of floral development by a gibberellin-regulated microRNA.</title>
        <authorList>
            <person name="Achard P."/>
            <person name="Herr A."/>
            <person name="Baulcombe D.C."/>
            <person name="Harberd N.P."/>
        </authorList>
    </citation>
    <scope>FUNCTION</scope>
    <scope>REPRESSION BY MICRORNA159</scope>
</reference>
<reference key="11">
    <citation type="journal article" date="2005" name="Plant Cell">
        <title>The Arabidopsis GAMYB-like genes, MYB33 and MYB65, are microRNA-regulated genes that redundantly facilitate anther development.</title>
        <authorList>
            <person name="Millar A.A."/>
            <person name="Gubler F."/>
        </authorList>
    </citation>
    <scope>FUNCTION</scope>
    <scope>DISRUPTION PHENOTYPE</scope>
    <scope>TISSUE SPECIFICITY</scope>
    <scope>DEVELOPMENTAL STAGE</scope>
    <scope>REGULATION BY MIR159</scope>
    <source>
        <strain>cv. Columbia</strain>
    </source>
</reference>
<reference key="12">
    <citation type="journal article" date="2007" name="Plant J.">
        <title>ABA induction of miR159 controls transcript levels of two MYB factors during Arabidopsis seed germination.</title>
        <authorList>
            <person name="Reyes J.L."/>
            <person name="Chua N.-H."/>
        </authorList>
    </citation>
    <scope>FUNCTION</scope>
    <scope>DISRUPTION PHENOTYPE</scope>
    <scope>REPRESSION BY MICRORNA159</scope>
    <source>
        <strain>cv. Columbia</strain>
    </source>
</reference>
<reference key="13">
    <citation type="journal article" date="2007" name="Proc. Natl. Acad. Sci. U.S.A.">
        <title>Genetic analysis reveals functional redundancy and the major target genes of the Arabidopsis miR159 family.</title>
        <authorList>
            <person name="Allen R.S."/>
            <person name="Li J."/>
            <person name="Stahle M.I."/>
            <person name="Dubroue A."/>
            <person name="Gubler F."/>
            <person name="Millar A.A."/>
        </authorList>
    </citation>
    <scope>REPRESSION BY MICRORNA159</scope>
</reference>
<reference key="14">
    <citation type="journal article" date="2010" name="Plant Physiol.">
        <title>The microRNA159-regulated GAMYB-like genes inhibit growth and promote programmed cell death in Arabidopsis.</title>
        <authorList>
            <person name="Alonso-Peral M.M."/>
            <person name="Li J."/>
            <person name="Li Y."/>
            <person name="Allen R.S."/>
            <person name="Schnippenkoetter W."/>
            <person name="Ohms S."/>
            <person name="White R.G."/>
            <person name="Millar A.A."/>
        </authorList>
    </citation>
    <scope>FUNCTION</scope>
    <scope>DISRUPTION PHENOTYPE</scope>
    <scope>REPRESSION BY MICRORNA159</scope>
    <source>
        <strain>cv. Columbia</strain>
    </source>
</reference>
<reference key="15">
    <citation type="journal article" date="2013" name="PLoS Genet.">
        <title>MYB97, MYB101 and MYB120 function as male factors that control pollen tube-synergid interaction in Arabidopsis thaliana fertilization.</title>
        <authorList>
            <person name="Liang Y."/>
            <person name="Tan Z.-M."/>
            <person name="Zhu L."/>
            <person name="Niu Q.-K."/>
            <person name="Zhou J.-J."/>
            <person name="Li M."/>
            <person name="Chen L.-Q."/>
            <person name="Zhang X.-Q."/>
            <person name="Ye D."/>
        </authorList>
    </citation>
    <scope>TISSUE SPECIFICITY</scope>
    <source>
        <strain>cv. Columbia</strain>
    </source>
</reference>
<feature type="chain" id="PRO_0000439242" description="Transcription factor MYB33">
    <location>
        <begin position="1"/>
        <end position="520"/>
    </location>
</feature>
<feature type="domain" description="HTH myb-type 1" evidence="1">
    <location>
        <begin position="29"/>
        <end position="81"/>
    </location>
</feature>
<feature type="domain" description="HTH myb-type 2" evidence="1">
    <location>
        <begin position="82"/>
        <end position="136"/>
    </location>
</feature>
<feature type="DNA-binding region" description="H-T-H motif" evidence="1">
    <location>
        <begin position="57"/>
        <end position="81"/>
    </location>
</feature>
<feature type="DNA-binding region" description="H-T-H motif" evidence="1">
    <location>
        <begin position="109"/>
        <end position="132"/>
    </location>
</feature>
<feature type="region of interest" description="Disordered" evidence="2">
    <location>
        <begin position="1"/>
        <end position="24"/>
    </location>
</feature>
<feature type="region of interest" description="Disordered" evidence="2">
    <location>
        <begin position="331"/>
        <end position="359"/>
    </location>
</feature>
<feature type="region of interest" description="Disordered" evidence="2">
    <location>
        <begin position="426"/>
        <end position="447"/>
    </location>
</feature>
<feature type="compositionally biased region" description="Low complexity" evidence="2">
    <location>
        <begin position="331"/>
        <end position="342"/>
    </location>
</feature>
<feature type="splice variant" id="VSP_058813" description="In isoform 2.">
    <original>RQREKKRKPLLDIT</original>
    <variation>SELLFTLPSLEIVC</variation>
    <location>
        <begin position="438"/>
        <end position="451"/>
    </location>
</feature>
<feature type="splice variant" id="VSP_058814" description="In isoform 2.">
    <location>
        <begin position="452"/>
        <end position="520"/>
    </location>
</feature>
<feature type="sequence conflict" description="In Ref. 7; AAC83597." evidence="13" ref="7">
    <original>Q</original>
    <variation>P</variation>
    <location>
        <position position="171"/>
    </location>
</feature>
<organism>
    <name type="scientific">Arabidopsis thaliana</name>
    <name type="common">Mouse-ear cress</name>
    <dbReference type="NCBI Taxonomy" id="3702"/>
    <lineage>
        <taxon>Eukaryota</taxon>
        <taxon>Viridiplantae</taxon>
        <taxon>Streptophyta</taxon>
        <taxon>Embryophyta</taxon>
        <taxon>Tracheophyta</taxon>
        <taxon>Spermatophyta</taxon>
        <taxon>Magnoliopsida</taxon>
        <taxon>eudicotyledons</taxon>
        <taxon>Gunneridae</taxon>
        <taxon>Pentapetalae</taxon>
        <taxon>rosids</taxon>
        <taxon>malvids</taxon>
        <taxon>Brassicales</taxon>
        <taxon>Brassicaceae</taxon>
        <taxon>Camelineae</taxon>
        <taxon>Arabidopsis</taxon>
    </lineage>
</organism>
<accession>Q8W1W6</accession>
<accession>A0A178UNH0</accession>
<accession>B2CUN6</accession>
<accession>Q9LHS6</accession>
<accession>Q9ZTE7</accession>
<proteinExistence type="evidence at transcript level"/>